<gene>
    <name evidence="1" type="primary">smpB</name>
    <name type="ordered locus">Achl_2397</name>
</gene>
<accession>B8HBH4</accession>
<feature type="chain" id="PRO_1000197603" description="SsrA-binding protein">
    <location>
        <begin position="1"/>
        <end position="158"/>
    </location>
</feature>
<feature type="region of interest" description="Disordered" evidence="2">
    <location>
        <begin position="133"/>
        <end position="158"/>
    </location>
</feature>
<feature type="compositionally biased region" description="Basic and acidic residues" evidence="2">
    <location>
        <begin position="133"/>
        <end position="152"/>
    </location>
</feature>
<keyword id="KW-0963">Cytoplasm</keyword>
<keyword id="KW-0694">RNA-binding</keyword>
<proteinExistence type="inferred from homology"/>
<reference key="1">
    <citation type="submission" date="2009-01" db="EMBL/GenBank/DDBJ databases">
        <title>Complete sequence of chromosome of Arthrobacter chlorophenolicus A6.</title>
        <authorList>
            <consortium name="US DOE Joint Genome Institute"/>
            <person name="Lucas S."/>
            <person name="Copeland A."/>
            <person name="Lapidus A."/>
            <person name="Glavina del Rio T."/>
            <person name="Tice H."/>
            <person name="Bruce D."/>
            <person name="Goodwin L."/>
            <person name="Pitluck S."/>
            <person name="Goltsman E."/>
            <person name="Clum A."/>
            <person name="Larimer F."/>
            <person name="Land M."/>
            <person name="Hauser L."/>
            <person name="Kyrpides N."/>
            <person name="Mikhailova N."/>
            <person name="Jansson J."/>
            <person name="Richardson P."/>
        </authorList>
    </citation>
    <scope>NUCLEOTIDE SEQUENCE [LARGE SCALE GENOMIC DNA]</scope>
    <source>
        <strain>ATCC 700700 / DSM 12829 / CIP 107037 / JCM 12360 / KCTC 9906 / NCIMB 13794 / A6</strain>
    </source>
</reference>
<comment type="function">
    <text evidence="1">Required for rescue of stalled ribosomes mediated by trans-translation. Binds to transfer-messenger RNA (tmRNA), required for stable association of tmRNA with ribosomes. tmRNA and SmpB together mimic tRNA shape, replacing the anticodon stem-loop with SmpB. tmRNA is encoded by the ssrA gene; the 2 termini fold to resemble tRNA(Ala) and it encodes a 'tag peptide', a short internal open reading frame. During trans-translation Ala-aminoacylated tmRNA acts like a tRNA, entering the A-site of stalled ribosomes, displacing the stalled mRNA. The ribosome then switches to translate the ORF on the tmRNA; the nascent peptide is terminated with the 'tag peptide' encoded by the tmRNA and targeted for degradation. The ribosome is freed to recommence translation, which seems to be the essential function of trans-translation.</text>
</comment>
<comment type="subcellular location">
    <subcellularLocation>
        <location evidence="1">Cytoplasm</location>
    </subcellularLocation>
    <text evidence="1">The tmRNA-SmpB complex associates with stalled 70S ribosomes.</text>
</comment>
<comment type="similarity">
    <text evidence="1">Belongs to the SmpB family.</text>
</comment>
<organism>
    <name type="scientific">Pseudarthrobacter chlorophenolicus (strain ATCC 700700 / DSM 12829 / CIP 107037 / JCM 12360 / KCTC 9906 / NCIMB 13794 / A6)</name>
    <name type="common">Arthrobacter chlorophenolicus</name>
    <dbReference type="NCBI Taxonomy" id="452863"/>
    <lineage>
        <taxon>Bacteria</taxon>
        <taxon>Bacillati</taxon>
        <taxon>Actinomycetota</taxon>
        <taxon>Actinomycetes</taxon>
        <taxon>Micrococcales</taxon>
        <taxon>Micrococcaceae</taxon>
        <taxon>Pseudarthrobacter</taxon>
    </lineage>
</organism>
<protein>
    <recommendedName>
        <fullName evidence="1">SsrA-binding protein</fullName>
    </recommendedName>
    <alternativeName>
        <fullName evidence="1">Small protein B</fullName>
    </alternativeName>
</protein>
<name>SSRP_PSECP</name>
<dbReference type="EMBL" id="CP001341">
    <property type="protein sequence ID" value="ACL40362.1"/>
    <property type="molecule type" value="Genomic_DNA"/>
</dbReference>
<dbReference type="RefSeq" id="WP_015937574.1">
    <property type="nucleotide sequence ID" value="NC_011886.1"/>
</dbReference>
<dbReference type="SMR" id="B8HBH4"/>
<dbReference type="STRING" id="452863.Achl_2397"/>
<dbReference type="KEGG" id="ach:Achl_2397"/>
<dbReference type="eggNOG" id="COG0691">
    <property type="taxonomic scope" value="Bacteria"/>
</dbReference>
<dbReference type="HOGENOM" id="CLU_108953_2_1_11"/>
<dbReference type="OrthoDB" id="9805462at2"/>
<dbReference type="Proteomes" id="UP000002505">
    <property type="component" value="Chromosome"/>
</dbReference>
<dbReference type="GO" id="GO:0005829">
    <property type="term" value="C:cytosol"/>
    <property type="evidence" value="ECO:0007669"/>
    <property type="project" value="TreeGrafter"/>
</dbReference>
<dbReference type="GO" id="GO:0003723">
    <property type="term" value="F:RNA binding"/>
    <property type="evidence" value="ECO:0007669"/>
    <property type="project" value="UniProtKB-UniRule"/>
</dbReference>
<dbReference type="GO" id="GO:0070929">
    <property type="term" value="P:trans-translation"/>
    <property type="evidence" value="ECO:0007669"/>
    <property type="project" value="UniProtKB-UniRule"/>
</dbReference>
<dbReference type="CDD" id="cd09294">
    <property type="entry name" value="SmpB"/>
    <property type="match status" value="1"/>
</dbReference>
<dbReference type="Gene3D" id="2.40.280.10">
    <property type="match status" value="1"/>
</dbReference>
<dbReference type="HAMAP" id="MF_00023">
    <property type="entry name" value="SmpB"/>
    <property type="match status" value="1"/>
</dbReference>
<dbReference type="InterPro" id="IPR023620">
    <property type="entry name" value="SmpB"/>
</dbReference>
<dbReference type="InterPro" id="IPR000037">
    <property type="entry name" value="SsrA-bd_prot"/>
</dbReference>
<dbReference type="InterPro" id="IPR020081">
    <property type="entry name" value="SsrA-bd_prot_CS"/>
</dbReference>
<dbReference type="NCBIfam" id="NF003843">
    <property type="entry name" value="PRK05422.1"/>
    <property type="match status" value="1"/>
</dbReference>
<dbReference type="NCBIfam" id="TIGR00086">
    <property type="entry name" value="smpB"/>
    <property type="match status" value="1"/>
</dbReference>
<dbReference type="PANTHER" id="PTHR30308:SF2">
    <property type="entry name" value="SSRA-BINDING PROTEIN"/>
    <property type="match status" value="1"/>
</dbReference>
<dbReference type="PANTHER" id="PTHR30308">
    <property type="entry name" value="TMRNA-BINDING COMPONENT OF TRANS-TRANSLATION TAGGING COMPLEX"/>
    <property type="match status" value="1"/>
</dbReference>
<dbReference type="Pfam" id="PF01668">
    <property type="entry name" value="SmpB"/>
    <property type="match status" value="1"/>
</dbReference>
<dbReference type="SUPFAM" id="SSF74982">
    <property type="entry name" value="Small protein B (SmpB)"/>
    <property type="match status" value="1"/>
</dbReference>
<dbReference type="PROSITE" id="PS01317">
    <property type="entry name" value="SSRP"/>
    <property type="match status" value="1"/>
</dbReference>
<evidence type="ECO:0000255" key="1">
    <source>
        <dbReference type="HAMAP-Rule" id="MF_00023"/>
    </source>
</evidence>
<evidence type="ECO:0000256" key="2">
    <source>
        <dbReference type="SAM" id="MobiDB-lite"/>
    </source>
</evidence>
<sequence>MPKESGRKVVATNRKARHDYHVLDTYEAGIALMGTEVKSLREGHASMVDGFCTFYNDELWMEAIHIPEYNQGSWTNHAARRRRKLLLHREELIKISRKVQEAGYTIVPLQLYFVDGRAKVEIGVARGKREYDKRQTLREQQDNREAQREMRERNRRRG</sequence>